<protein>
    <recommendedName>
        <fullName>Probable protein E5</fullName>
    </recommendedName>
</protein>
<dbReference type="EMBL" id="K02718">
    <property type="protein sequence ID" value="AAA46938.1"/>
    <property type="status" value="ALT_FRAME"/>
    <property type="molecule type" value="Genomic_DNA"/>
</dbReference>
<dbReference type="EMBL" id="AF536179">
    <property type="protein sequence ID" value="AAQ10717.1"/>
    <property type="molecule type" value="Genomic_DNA"/>
</dbReference>
<dbReference type="PIR" id="A30016">
    <property type="entry name" value="W5WLHS"/>
</dbReference>
<dbReference type="RefSeq" id="NP_041330.2">
    <property type="nucleotide sequence ID" value="NC_001526.4"/>
</dbReference>
<dbReference type="BioGRID" id="4263556">
    <property type="interactions" value="152"/>
</dbReference>
<dbReference type="IntAct" id="P06927">
    <property type="interactions" value="153"/>
</dbReference>
<dbReference type="MINT" id="P06927"/>
<dbReference type="TCDB" id="1.A.97.1.1">
    <property type="family name" value="the human papillomavirus type 16 e5 viroporin (hpv-e5) family"/>
</dbReference>
<dbReference type="GeneID" id="1489077"/>
<dbReference type="KEGG" id="vg:1489077"/>
<dbReference type="Proteomes" id="UP000009251">
    <property type="component" value="Segment"/>
</dbReference>
<dbReference type="Proteomes" id="UP000106302">
    <property type="component" value="Genome"/>
</dbReference>
<dbReference type="GO" id="GO:0044167">
    <property type="term" value="C:host cell endoplasmic reticulum membrane"/>
    <property type="evidence" value="ECO:0007669"/>
    <property type="project" value="UniProtKB-SubCell"/>
</dbReference>
<dbReference type="GO" id="GO:0044177">
    <property type="term" value="C:host cell Golgi apparatus"/>
    <property type="evidence" value="ECO:0007669"/>
    <property type="project" value="UniProtKB-SubCell"/>
</dbReference>
<dbReference type="GO" id="GO:0020002">
    <property type="term" value="C:host cell plasma membrane"/>
    <property type="evidence" value="ECO:0000314"/>
    <property type="project" value="CACAO"/>
</dbReference>
<dbReference type="GO" id="GO:0016020">
    <property type="term" value="C:membrane"/>
    <property type="evidence" value="ECO:0007669"/>
    <property type="project" value="UniProtKB-KW"/>
</dbReference>
<dbReference type="GO" id="GO:0044003">
    <property type="term" value="P:symbiont-mediated perturbation of host process"/>
    <property type="evidence" value="ECO:0000314"/>
    <property type="project" value="CACAO"/>
</dbReference>
<dbReference type="GO" id="GO:0046776">
    <property type="term" value="P:symbiont-mediated suppression of host antigen processing and presentation of peptide antigen via MHC class I"/>
    <property type="evidence" value="ECO:0007669"/>
    <property type="project" value="UniProtKB-KW"/>
</dbReference>
<dbReference type="GO" id="GO:0033668">
    <property type="term" value="P:symbiont-mediated suppression of host apoptosis"/>
    <property type="evidence" value="ECO:0000315"/>
    <property type="project" value="CACAO"/>
</dbReference>
<dbReference type="InterPro" id="IPR004270">
    <property type="entry name" value="Papilloma_E5_alpha"/>
</dbReference>
<dbReference type="Pfam" id="PF03025">
    <property type="entry name" value="Papilloma_E5"/>
    <property type="match status" value="1"/>
</dbReference>
<name>VE5_HPV16</name>
<comment type="function">
    <text evidence="4 5 6 7">Acts to keep host cells in a proliferation-competent state upon differentiation. Enhances host epidermal growth factor receptor (EGFR) activation after stimulation by EGF by inhibiting EGFR internalization. Induces a redistribution of host caveolin-1 and glycosphingolipid (ganglioside GM1) components of lipid rafts to the plasma membrane. Since GM1s inhibit cytotoxic T-lymphocytes, block immune synapse formation, and enhance proliferative signaling by the EGFR, E5 may enhance immune evasion and cell proliferation via a common mechanism. E5 also alters endosomal pH by interacting with the vacuolar H+-ATPase, which is a proton pump responsible for acidifying cellular organelles. Additionally, E5 prevents transport of the major histocompatibility class I to the cell surface and retains the complex in the Golgi apparatus. Binds and prevents host ZNT1-TMC6-TMC8 complex-mediated inhibition of transcription factors induced by zinc and cytokines in keratinocytes (PubMed:18158319).</text>
</comment>
<comment type="subunit">
    <text evidence="2 3 5 7 8">Homooligomer. Interacts with host BCAP31; this interaction seems to correlate with the ability of HPV-positive differentiated cells to remain competent for proliferation. Interacts with host ATP6V0C. Interacts (via N-terminus) with host HLA class I heavy chains A1, A2, A3 and B8; these interactions inhibit host immune response by sequestering MHC class I peptides to the host Golgi apparatus. Interacts with host TMC6, TMC8 and ZNT1; the interaction blocks their negative regulation (PubMed:18158319).</text>
</comment>
<comment type="interaction">
    <interactant intactId="EBI-8561748">
        <id>P06927</id>
    </interactant>
    <interactant intactId="EBI-2891238">
        <id>Q93050</id>
        <label>ATP6V0A1</label>
    </interactant>
    <organismsDiffer>true</organismsDiffer>
    <experiments>3</experiments>
</comment>
<comment type="subcellular location">
    <subcellularLocation>
        <location evidence="9">Host membrane</location>
        <topology evidence="9">Multi-pass membrane protein</topology>
    </subcellularLocation>
    <subcellularLocation>
        <location evidence="11">Host endoplasmic reticulum membrane</location>
    </subcellularLocation>
    <subcellularLocation>
        <location evidence="11">Host Golgi apparatus</location>
    </subcellularLocation>
</comment>
<comment type="miscellaneous">
    <text>HPV16, in comparison to HPV types 6 and 11, is more often associated with malignant genital cancers in humans.</text>
</comment>
<comment type="miscellaneous">
    <text evidence="10">Part of the antigens expressed and presented within HPV-positive head and neck tumors.</text>
</comment>
<comment type="similarity">
    <text evidence="12">Belongs to the papillomaviridae E5 protein family.</text>
</comment>
<comment type="sequence caution" evidence="12">
    <conflict type="frameshift">
        <sequence resource="EMBL-CDS" id="AAA46938"/>
    </conflict>
</comment>
<organism>
    <name type="scientific">Human papillomavirus type 16</name>
    <dbReference type="NCBI Taxonomy" id="333760"/>
    <lineage>
        <taxon>Viruses</taxon>
        <taxon>Monodnaviria</taxon>
        <taxon>Shotokuvirae</taxon>
        <taxon>Cossaviricota</taxon>
        <taxon>Papovaviricetes</taxon>
        <taxon>Zurhausenvirales</taxon>
        <taxon>Papillomaviridae</taxon>
        <taxon>Firstpapillomavirinae</taxon>
        <taxon>Alphapapillomavirus</taxon>
        <taxon>Alphapapillomavirus 9</taxon>
    </lineage>
</organism>
<feature type="chain" id="PRO_0000133289" description="Probable protein E5">
    <location>
        <begin position="1"/>
        <end position="83"/>
    </location>
</feature>
<feature type="transmembrane region" description="Helical" evidence="1">
    <location>
        <begin position="9"/>
        <end position="29"/>
    </location>
</feature>
<feature type="transmembrane region" description="Helical" evidence="1">
    <location>
        <begin position="42"/>
        <end position="62"/>
    </location>
</feature>
<feature type="transmembrane region" description="Helical" evidence="1">
    <location>
        <begin position="63"/>
        <end position="83"/>
    </location>
</feature>
<feature type="sequence conflict" description="In Ref. 3; AAQ10717." evidence="12" ref="3">
    <original>I</original>
    <variation>L</variation>
    <location>
        <position position="44"/>
    </location>
</feature>
<feature type="sequence conflict" description="In Ref. 3; AAQ10717." evidence="12" ref="3">
    <original>V</original>
    <variation>G</variation>
    <location>
        <position position="62"/>
    </location>
</feature>
<feature type="sequence conflict" description="In Ref. 3; AAQ10717." evidence="12" ref="3">
    <original>V</original>
    <variation>G</variation>
    <location>
        <position position="67"/>
    </location>
</feature>
<sequence>MTNLDTASTTLLACFLLCFCVLLCVCLLIRPLLLSVSTYTSLIILVLLLWITAASAFRCFIVYIIFVYIPLFLIHTHARFLIT</sequence>
<proteinExistence type="evidence at protein level"/>
<reference key="1">
    <citation type="journal article" date="1985" name="Virology">
        <title>Human papillomavirus type 16 DNA sequence.</title>
        <authorList>
            <person name="Seedorf K."/>
            <person name="Krammer G."/>
            <person name="Durst M."/>
            <person name="Suhai S."/>
            <person name="Rowekamp W.G."/>
        </authorList>
    </citation>
    <scope>NUCLEOTIDE SEQUENCE [GENOMIC DNA]</scope>
</reference>
<reference key="2">
    <citation type="journal article" date="1988" name="Virology">
        <title>DNA sequence of the HPV-16 E5 ORF and the structural conservation of its encoded protein.</title>
        <authorList>
            <person name="Bubb V."/>
            <person name="McCance D.J."/>
            <person name="Schlegel R."/>
        </authorList>
    </citation>
    <scope>NUCLEOTIDE SEQUENCE [GENOMIC DNA]</scope>
</reference>
<reference key="3">
    <citation type="submission" date="2002-08" db="EMBL/GenBank/DDBJ databases">
        <title>Cloning and sequencing of non-European human papillomavirus (HPV) variant complete genomes from cervicovaginal cells by an overlapping PCR method.</title>
        <authorList>
            <person name="Terai M."/>
            <person name="Fu L."/>
            <person name="Ma Z."/>
            <person name="Burk R.D."/>
        </authorList>
    </citation>
    <scope>NUCLEOTIDE SEQUENCE [GENOMIC DNA]</scope>
    <source>
        <strain>Isolate European German 131</strain>
    </source>
</reference>
<reference key="4">
    <citation type="journal article" date="1993" name="J. Virol.">
        <title>The human papillomavirus type 6 and 16 E5 proteins are membrane-associated proteins which associate with the 16-kilodalton pore-forming protein.</title>
        <authorList>
            <person name="Conrad M."/>
            <person name="Bubb V.J."/>
            <person name="Schlegel R."/>
        </authorList>
    </citation>
    <scope>SUBCELLULAR LOCATION</scope>
</reference>
<reference key="5">
    <citation type="journal article" date="2000" name="Oncogene">
        <title>Binding of human papillomavirus 16 E5 to the 16 kDa subunit c (proteolipid) of the vacuolar H+-ATPase can be dissociated from the E5-mediated epidermal growth factor receptor overactivation.</title>
        <authorList>
            <person name="Rodriguez M.I."/>
            <person name="Finbow M.E."/>
            <person name="Alonso A."/>
        </authorList>
    </citation>
    <scope>INTERACTION WITH HOST ATP6V0C</scope>
</reference>
<reference key="6">
    <citation type="journal article" date="2003" name="Virology">
        <title>Oligomerization of the E5 protein of human papillomavirus type 16 occurs through multiple hydrophobic regions.</title>
        <authorList>
            <person name="Gieswein C.E."/>
            <person name="Sharom F.J."/>
            <person name="Wildeman A.G."/>
        </authorList>
    </citation>
    <scope>SUBUNIT</scope>
</reference>
<reference key="7">
    <citation type="journal article" date="2005" name="J. Virol.">
        <title>Endoplasmic reticulum-localized human papillomavirus type 16 E5 protein alters endosomal pH but not trans-Golgi pH.</title>
        <authorList>
            <person name="Disbrow G.L."/>
            <person name="Hanover J.A."/>
            <person name="Schlegel R."/>
        </authorList>
    </citation>
    <scope>FUNCTION</scope>
</reference>
<reference key="8">
    <citation type="journal article" date="2006" name="Int. J. Cancer">
        <title>E5 protein of human papillomavirus 16 downregulates HLA class I and interacts with the heavy chain via its first hydrophobic domain.</title>
        <authorList>
            <person name="Ashrafi G.H."/>
            <person name="Haghshenas M."/>
            <person name="Marchetti B."/>
            <person name="Campo M.S."/>
        </authorList>
    </citation>
    <scope>FUNCTION</scope>
    <scope>INTERACTION WITH HOST HLA-A</scope>
</reference>
<reference key="9">
    <citation type="journal article" date="2008" name="J. Exp. Med.">
        <title>Regulation of cellular zinc balance as a potential mechanism of EVER-mediated protection against pathogenesis by cutaneous oncogenic human papillomaviruses.</title>
        <authorList>
            <person name="Lazarczyk M."/>
            <person name="Pons C."/>
            <person name="Mendoza J.A."/>
            <person name="Cassonnet P."/>
            <person name="Jacob Y."/>
            <person name="Favre M."/>
        </authorList>
    </citation>
    <scope>FUNCTION</scope>
    <scope>INTERACTION WITH TMC6; TMC8 AND ZNT1</scope>
</reference>
<reference key="10">
    <citation type="journal article" date="2008" name="J. Virol.">
        <title>Bap31 is a novel target of the human papillomavirus E5 protein.</title>
        <authorList>
            <person name="Regan J.A."/>
            <person name="Laimins L.A."/>
        </authorList>
    </citation>
    <scope>INTERACTION WITH HOST BCAP31</scope>
</reference>
<reference key="11">
    <citation type="journal article" date="2008" name="Oncogene">
        <title>HPV-16 E5 oncoprotein upregulates lipid raft components caveolin-1 and ganglioside GM1 at the plasma membrane of cervical cells.</title>
        <authorList>
            <person name="Suprynowicz F.A."/>
            <person name="Disbrow G.L."/>
            <person name="Krawczyk E."/>
            <person name="Simic V."/>
            <person name="Lantzky K."/>
            <person name="Schlegel R."/>
        </authorList>
    </citation>
    <scope>FUNCTION</scope>
</reference>
<reference key="12">
    <citation type="journal article" date="2009" name="Virology">
        <title>Characterization of the plasma membrane localization and orientation of HPV16 E5 for cell-cell fusion.</title>
        <authorList>
            <person name="Hu L."/>
            <person name="Ceresa B.P."/>
        </authorList>
    </citation>
    <scope>SUBCELLULAR LOCATION</scope>
</reference>
<reference key="13">
    <citation type="journal article" date="2021" name="Nature">
        <title>Functional HPV-specific PD-1+ stem-like CD8 T cells in head and neck cancer.</title>
        <authorList>
            <person name="Eberhardt C.S."/>
            <person name="Kissick H.T."/>
            <person name="Patel M.R."/>
            <person name="Cardenas M.A."/>
            <person name="Prokhnevska N."/>
            <person name="Obeng R.C."/>
            <person name="Nasti T.H."/>
            <person name="Griffith C.C."/>
            <person name="Im S.J."/>
            <person name="Wang X."/>
            <person name="Shin D.M."/>
            <person name="Carrington M."/>
            <person name="Chen Z.G."/>
            <person name="Sidney J."/>
            <person name="Sette A."/>
            <person name="Saba N.F."/>
            <person name="Wieland A."/>
            <person name="Ahmed R."/>
        </authorList>
    </citation>
    <scope>ROLE AS ANTIGEN IN HEAD AND NECK SQUAMOUS CELL CARCINOMA</scope>
</reference>
<accession>P06927</accession>
<accession>Q71BI2</accession>
<gene>
    <name type="primary">E5</name>
</gene>
<keyword id="KW-0244">Early protein</keyword>
<keyword id="KW-1038">Host endoplasmic reticulum</keyword>
<keyword id="KW-1040">Host Golgi apparatus</keyword>
<keyword id="KW-1043">Host membrane</keyword>
<keyword id="KW-0945">Host-virus interaction</keyword>
<keyword id="KW-1080">Inhibition of host adaptive immune response by virus</keyword>
<keyword id="KW-1115">Inhibition of host MHC class I molecule presentation by virus</keyword>
<keyword id="KW-0472">Membrane</keyword>
<keyword id="KW-1185">Reference proteome</keyword>
<keyword id="KW-0812">Transmembrane</keyword>
<keyword id="KW-1133">Transmembrane helix</keyword>
<keyword id="KW-0899">Viral immunoevasion</keyword>
<evidence type="ECO:0000255" key="1"/>
<evidence type="ECO:0000269" key="2">
    <source>
    </source>
</evidence>
<evidence type="ECO:0000269" key="3">
    <source>
    </source>
</evidence>
<evidence type="ECO:0000269" key="4">
    <source>
    </source>
</evidence>
<evidence type="ECO:0000269" key="5">
    <source>
    </source>
</evidence>
<evidence type="ECO:0000269" key="6">
    <source>
    </source>
</evidence>
<evidence type="ECO:0000269" key="7">
    <source>
    </source>
</evidence>
<evidence type="ECO:0000269" key="8">
    <source>
    </source>
</evidence>
<evidence type="ECO:0000269" key="9">
    <source>
    </source>
</evidence>
<evidence type="ECO:0000269" key="10">
    <source>
    </source>
</evidence>
<evidence type="ECO:0000269" key="11">
    <source>
    </source>
</evidence>
<evidence type="ECO:0000305" key="12"/>
<organismHost>
    <name type="scientific">Homo sapiens</name>
    <name type="common">Human</name>
    <dbReference type="NCBI Taxonomy" id="9606"/>
</organismHost>